<keyword id="KW-1185">Reference proteome</keyword>
<keyword id="KW-0687">Ribonucleoprotein</keyword>
<keyword id="KW-0689">Ribosomal protein</keyword>
<keyword id="KW-0694">RNA-binding</keyword>
<keyword id="KW-0699">rRNA-binding</keyword>
<comment type="function">
    <text evidence="1">One of two assembly initiator proteins, it binds directly to the 5'-end of the 23S rRNA, where it nucleates assembly of the 50S subunit.</text>
</comment>
<comment type="function">
    <text evidence="1">One of the proteins that surrounds the polypeptide exit tunnel on the outside of the subunit.</text>
</comment>
<comment type="subunit">
    <text evidence="1">Part of the 50S ribosomal subunit.</text>
</comment>
<comment type="similarity">
    <text evidence="1">Belongs to the universal ribosomal protein uL24 family.</text>
</comment>
<feature type="chain" id="PRO_1000165940" description="Large ribosomal subunit protein uL24">
    <location>
        <begin position="1"/>
        <end position="106"/>
    </location>
</feature>
<accession>B9MBU8</accession>
<reference key="1">
    <citation type="submission" date="2009-01" db="EMBL/GenBank/DDBJ databases">
        <title>Complete sequence of Diaphorobacter sp. TPSY.</title>
        <authorList>
            <consortium name="US DOE Joint Genome Institute"/>
            <person name="Lucas S."/>
            <person name="Copeland A."/>
            <person name="Lapidus A."/>
            <person name="Glavina del Rio T."/>
            <person name="Tice H."/>
            <person name="Bruce D."/>
            <person name="Goodwin L."/>
            <person name="Pitluck S."/>
            <person name="Chertkov O."/>
            <person name="Brettin T."/>
            <person name="Detter J.C."/>
            <person name="Han C."/>
            <person name="Larimer F."/>
            <person name="Land M."/>
            <person name="Hauser L."/>
            <person name="Kyrpides N."/>
            <person name="Mikhailova N."/>
            <person name="Coates J.D."/>
        </authorList>
    </citation>
    <scope>NUCLEOTIDE SEQUENCE [LARGE SCALE GENOMIC DNA]</scope>
    <source>
        <strain>TPSY</strain>
    </source>
</reference>
<protein>
    <recommendedName>
        <fullName evidence="1">Large ribosomal subunit protein uL24</fullName>
    </recommendedName>
    <alternativeName>
        <fullName evidence="2">50S ribosomal protein L24</fullName>
    </alternativeName>
</protein>
<evidence type="ECO:0000255" key="1">
    <source>
        <dbReference type="HAMAP-Rule" id="MF_01326"/>
    </source>
</evidence>
<evidence type="ECO:0000305" key="2"/>
<name>RL24_ACIET</name>
<proteinExistence type="inferred from homology"/>
<organism>
    <name type="scientific">Acidovorax ebreus (strain TPSY)</name>
    <name type="common">Diaphorobacter sp. (strain TPSY)</name>
    <dbReference type="NCBI Taxonomy" id="535289"/>
    <lineage>
        <taxon>Bacteria</taxon>
        <taxon>Pseudomonadati</taxon>
        <taxon>Pseudomonadota</taxon>
        <taxon>Betaproteobacteria</taxon>
        <taxon>Burkholderiales</taxon>
        <taxon>Comamonadaceae</taxon>
        <taxon>Diaphorobacter</taxon>
    </lineage>
</organism>
<sequence length="106" mass="11357">MNKIRKGDEVIVLTGRDKGKRGTVSLRKDDSHLVIEGINLVKKHVKPNPMKGTTGGIVEKAMPIHQSNVAIFNAATGKADRVGIKVQADGTRVRVFKSSGAEIKAA</sequence>
<dbReference type="EMBL" id="CP001392">
    <property type="protein sequence ID" value="ACM31868.1"/>
    <property type="molecule type" value="Genomic_DNA"/>
</dbReference>
<dbReference type="RefSeq" id="WP_011803854.1">
    <property type="nucleotide sequence ID" value="NC_011992.1"/>
</dbReference>
<dbReference type="SMR" id="B9MBU8"/>
<dbReference type="GeneID" id="84683102"/>
<dbReference type="KEGG" id="dia:Dtpsy_0384"/>
<dbReference type="eggNOG" id="COG0198">
    <property type="taxonomic scope" value="Bacteria"/>
</dbReference>
<dbReference type="HOGENOM" id="CLU_093315_2_2_4"/>
<dbReference type="Proteomes" id="UP000000450">
    <property type="component" value="Chromosome"/>
</dbReference>
<dbReference type="GO" id="GO:1990904">
    <property type="term" value="C:ribonucleoprotein complex"/>
    <property type="evidence" value="ECO:0007669"/>
    <property type="project" value="UniProtKB-KW"/>
</dbReference>
<dbReference type="GO" id="GO:0005840">
    <property type="term" value="C:ribosome"/>
    <property type="evidence" value="ECO:0007669"/>
    <property type="project" value="UniProtKB-KW"/>
</dbReference>
<dbReference type="GO" id="GO:0019843">
    <property type="term" value="F:rRNA binding"/>
    <property type="evidence" value="ECO:0007669"/>
    <property type="project" value="UniProtKB-UniRule"/>
</dbReference>
<dbReference type="GO" id="GO:0003735">
    <property type="term" value="F:structural constituent of ribosome"/>
    <property type="evidence" value="ECO:0007669"/>
    <property type="project" value="InterPro"/>
</dbReference>
<dbReference type="GO" id="GO:0006412">
    <property type="term" value="P:translation"/>
    <property type="evidence" value="ECO:0007669"/>
    <property type="project" value="UniProtKB-UniRule"/>
</dbReference>
<dbReference type="CDD" id="cd06089">
    <property type="entry name" value="KOW_RPL26"/>
    <property type="match status" value="1"/>
</dbReference>
<dbReference type="FunFam" id="2.30.30.30:FF:000004">
    <property type="entry name" value="50S ribosomal protein L24"/>
    <property type="match status" value="1"/>
</dbReference>
<dbReference type="Gene3D" id="2.30.30.30">
    <property type="match status" value="1"/>
</dbReference>
<dbReference type="HAMAP" id="MF_01326_B">
    <property type="entry name" value="Ribosomal_uL24_B"/>
    <property type="match status" value="1"/>
</dbReference>
<dbReference type="InterPro" id="IPR005824">
    <property type="entry name" value="KOW"/>
</dbReference>
<dbReference type="InterPro" id="IPR014722">
    <property type="entry name" value="Rib_uL2_dom2"/>
</dbReference>
<dbReference type="InterPro" id="IPR003256">
    <property type="entry name" value="Ribosomal_uL24"/>
</dbReference>
<dbReference type="InterPro" id="IPR005825">
    <property type="entry name" value="Ribosomal_uL24_CS"/>
</dbReference>
<dbReference type="InterPro" id="IPR041988">
    <property type="entry name" value="Ribosomal_uL24_KOW"/>
</dbReference>
<dbReference type="InterPro" id="IPR008991">
    <property type="entry name" value="Translation_prot_SH3-like_sf"/>
</dbReference>
<dbReference type="NCBIfam" id="TIGR01079">
    <property type="entry name" value="rplX_bact"/>
    <property type="match status" value="1"/>
</dbReference>
<dbReference type="PANTHER" id="PTHR12903">
    <property type="entry name" value="MITOCHONDRIAL RIBOSOMAL PROTEIN L24"/>
    <property type="match status" value="1"/>
</dbReference>
<dbReference type="Pfam" id="PF00467">
    <property type="entry name" value="KOW"/>
    <property type="match status" value="1"/>
</dbReference>
<dbReference type="Pfam" id="PF17136">
    <property type="entry name" value="ribosomal_L24"/>
    <property type="match status" value="1"/>
</dbReference>
<dbReference type="SMART" id="SM00739">
    <property type="entry name" value="KOW"/>
    <property type="match status" value="1"/>
</dbReference>
<dbReference type="SUPFAM" id="SSF50104">
    <property type="entry name" value="Translation proteins SH3-like domain"/>
    <property type="match status" value="1"/>
</dbReference>
<dbReference type="PROSITE" id="PS01108">
    <property type="entry name" value="RIBOSOMAL_L24"/>
    <property type="match status" value="1"/>
</dbReference>
<gene>
    <name evidence="1" type="primary">rplX</name>
    <name type="ordered locus">Dtpsy_0384</name>
</gene>